<organism>
    <name type="scientific">Danio rerio</name>
    <name type="common">Zebrafish</name>
    <name type="synonym">Brachydanio rerio</name>
    <dbReference type="NCBI Taxonomy" id="7955"/>
    <lineage>
        <taxon>Eukaryota</taxon>
        <taxon>Metazoa</taxon>
        <taxon>Chordata</taxon>
        <taxon>Craniata</taxon>
        <taxon>Vertebrata</taxon>
        <taxon>Euteleostomi</taxon>
        <taxon>Actinopterygii</taxon>
        <taxon>Neopterygii</taxon>
        <taxon>Teleostei</taxon>
        <taxon>Ostariophysi</taxon>
        <taxon>Cypriniformes</taxon>
        <taxon>Danionidae</taxon>
        <taxon>Danioninae</taxon>
        <taxon>Danio</taxon>
    </lineage>
</organism>
<comment type="function">
    <text evidence="1 2 3">In neurons, involved in the transport of late endosomes/lysosomes (By similarity). May be involved in dendrite morphogenesis and maintenance by regulating lysosomal trafficking (By similarity). May act as a molecular brake for retrograde transport of late endosomes/lysosomes, possibly via its interaction with MAP6 (By similarity). In motoneurons, may mediate the axonal transport of lysosomes and axonal sorting at the initial segment (By similarity). It remains unclear whether TMEM106B affects the transport of moving lysosomes in the anterograde or retrograde direction in neurites and whether it is particularly important in the sorting of lysosomes in axons or in dendrites (By similarity). In neurons, may also play a role in the regulation of lysosomal size and responsiveness to stress (By similarity). Required for proper lysosomal acidification (By similarity).</text>
</comment>
<comment type="subcellular location">
    <subcellularLocation>
        <location evidence="3">Late endosome membrane</location>
        <topology evidence="3">Single-pass type II membrane protein</topology>
    </subcellularLocation>
    <subcellularLocation>
        <location evidence="3">Lysosome membrane</location>
        <topology evidence="3">Single-pass type II membrane protein</topology>
    </subcellularLocation>
    <subcellularLocation>
        <location evidence="3">Cell membrane</location>
        <topology evidence="4">Single-pass type II membrane protein</topology>
    </subcellularLocation>
    <text evidence="3">A small fraction resides on the cell surface.</text>
</comment>
<comment type="similarity">
    <text evidence="5">Belongs to the TMEM106 family.</text>
</comment>
<keyword id="KW-1003">Cell membrane</keyword>
<keyword id="KW-1015">Disulfide bond</keyword>
<keyword id="KW-0967">Endosome</keyword>
<keyword id="KW-0325">Glycoprotein</keyword>
<keyword id="KW-0458">Lysosome</keyword>
<keyword id="KW-0472">Membrane</keyword>
<keyword id="KW-1185">Reference proteome</keyword>
<keyword id="KW-0735">Signal-anchor</keyword>
<keyword id="KW-0812">Transmembrane</keyword>
<keyword id="KW-1133">Transmembrane helix</keyword>
<keyword id="KW-0813">Transport</keyword>
<protein>
    <recommendedName>
        <fullName>Transmembrane protein 106B</fullName>
    </recommendedName>
</protein>
<gene>
    <name type="primary">tmem106b</name>
    <name type="ORF">ch211-134n17.2</name>
    <name type="ORF">ch211-195l15.2</name>
    <name type="ORF">zgc:114147</name>
</gene>
<accession>Q1LWC2</accession>
<accession>Q1LYK6</accession>
<evidence type="ECO:0000250" key="1">
    <source>
        <dbReference type="UniProtKB" id="Q6AYA5"/>
    </source>
</evidence>
<evidence type="ECO:0000250" key="2">
    <source>
        <dbReference type="UniProtKB" id="Q80X71"/>
    </source>
</evidence>
<evidence type="ECO:0000250" key="3">
    <source>
        <dbReference type="UniProtKB" id="Q9NUM4"/>
    </source>
</evidence>
<evidence type="ECO:0000255" key="4"/>
<evidence type="ECO:0000305" key="5"/>
<name>T106B_DANRE</name>
<sequence length="267" mass="29858">MGKALSHVAKHTCHDECQDSLTSSPGYSAMQTDDSKSGGDVSQFPYVEFTGRDSVTCPTCQGTGRIPRGQENQLVALIPYSDQRLRPRRTKLYVMASVILCLLLCTLAVFFLFPRSIDVNYVGVKSVYVSYDQSKRIVYLNVTNSLNITNNNYYSVDVANITARVQFSQTVIGKTRISNITTIGPLDMKQIDYMVPTTIADEMSYMYDYCTLQSIKVHNIVVMMQITVTTVYFGHAEQVSQEMYQYVDCGGNTTALHEYSLNTPLTG</sequence>
<proteinExistence type="inferred from homology"/>
<dbReference type="EMBL" id="BX572629">
    <property type="protein sequence ID" value="CAK04312.1"/>
    <property type="molecule type" value="Genomic_DNA"/>
</dbReference>
<dbReference type="EMBL" id="BX005064">
    <property type="protein sequence ID" value="CAK04098.1"/>
    <property type="molecule type" value="Genomic_DNA"/>
</dbReference>
<dbReference type="FunCoup" id="Q1LWC2">
    <property type="interactions" value="536"/>
</dbReference>
<dbReference type="STRING" id="7955.ENSDARP00000116643"/>
<dbReference type="GlyCosmos" id="Q1LWC2">
    <property type="glycosylation" value="5 sites, No reported glycans"/>
</dbReference>
<dbReference type="PaxDb" id="7955-ENSDARP00000052139"/>
<dbReference type="Ensembl" id="ENSDART00000191669">
    <property type="protein sequence ID" value="ENSDARP00000150837"/>
    <property type="gene ID" value="ENSDARG00000113700"/>
</dbReference>
<dbReference type="AGR" id="ZFIN:ZDB-GENE-050913-37"/>
<dbReference type="ZFIN" id="ZDB-GENE-050913-37">
    <property type="gene designation" value="tmem106bb"/>
</dbReference>
<dbReference type="eggNOG" id="ENOG502QQRZ">
    <property type="taxonomic scope" value="Eukaryota"/>
</dbReference>
<dbReference type="InParanoid" id="Q1LWC2"/>
<dbReference type="OMA" id="FGHSEQT"/>
<dbReference type="PhylomeDB" id="Q1LWC2"/>
<dbReference type="TreeFam" id="TF328907"/>
<dbReference type="PRO" id="PR:Q1LWC2"/>
<dbReference type="Proteomes" id="UP000000437">
    <property type="component" value="Unplaced"/>
</dbReference>
<dbReference type="GO" id="GO:0031902">
    <property type="term" value="C:late endosome membrane"/>
    <property type="evidence" value="ECO:0007669"/>
    <property type="project" value="UniProtKB-SubCell"/>
</dbReference>
<dbReference type="GO" id="GO:0005765">
    <property type="term" value="C:lysosomal membrane"/>
    <property type="evidence" value="ECO:0000250"/>
    <property type="project" value="UniProtKB"/>
</dbReference>
<dbReference type="GO" id="GO:0005886">
    <property type="term" value="C:plasma membrane"/>
    <property type="evidence" value="ECO:0007669"/>
    <property type="project" value="UniProtKB-SubCell"/>
</dbReference>
<dbReference type="GO" id="GO:0048813">
    <property type="term" value="P:dendrite morphogenesis"/>
    <property type="evidence" value="ECO:0000250"/>
    <property type="project" value="UniProtKB"/>
</dbReference>
<dbReference type="GO" id="GO:0032418">
    <property type="term" value="P:lysosome localization"/>
    <property type="evidence" value="ECO:0000250"/>
    <property type="project" value="UniProtKB"/>
</dbReference>
<dbReference type="InterPro" id="IPR009790">
    <property type="entry name" value="TMEM106"/>
</dbReference>
<dbReference type="InterPro" id="IPR048509">
    <property type="entry name" value="TMEM106_C"/>
</dbReference>
<dbReference type="InterPro" id="IPR048511">
    <property type="entry name" value="TMEM106_N"/>
</dbReference>
<dbReference type="PANTHER" id="PTHR28556">
    <property type="entry name" value="TRANSMEMBRANE PROTEIN 106B"/>
    <property type="match status" value="1"/>
</dbReference>
<dbReference type="PANTHER" id="PTHR28556:SF1">
    <property type="entry name" value="TRANSMEMBRANE PROTEIN 106B"/>
    <property type="match status" value="1"/>
</dbReference>
<dbReference type="Pfam" id="PF07092">
    <property type="entry name" value="TMEM106"/>
    <property type="match status" value="1"/>
</dbReference>
<dbReference type="Pfam" id="PF21002">
    <property type="entry name" value="TMEM106_N"/>
    <property type="match status" value="1"/>
</dbReference>
<dbReference type="SUPFAM" id="SSF117070">
    <property type="entry name" value="LEA14-like"/>
    <property type="match status" value="1"/>
</dbReference>
<feature type="chain" id="PRO_0000397671" description="Transmembrane protein 106B">
    <location>
        <begin position="1"/>
        <end position="267"/>
    </location>
</feature>
<feature type="topological domain" description="Cytoplasmic" evidence="4">
    <location>
        <begin position="1"/>
        <end position="92"/>
    </location>
</feature>
<feature type="transmembrane region" description="Helical" evidence="4">
    <location>
        <begin position="93"/>
        <end position="113"/>
    </location>
</feature>
<feature type="topological domain" description="Lumenal" evidence="4">
    <location>
        <begin position="114"/>
        <end position="267"/>
    </location>
</feature>
<feature type="glycosylation site" description="N-linked (GlcNAc...) asparagine" evidence="4">
    <location>
        <position position="141"/>
    </location>
</feature>
<feature type="glycosylation site" description="N-linked (GlcNAc...) asparagine" evidence="4">
    <location>
        <position position="147"/>
    </location>
</feature>
<feature type="glycosylation site" description="N-linked (GlcNAc...) asparagine" evidence="4">
    <location>
        <position position="160"/>
    </location>
</feature>
<feature type="glycosylation site" description="N-linked (GlcNAc...) asparagine" evidence="4">
    <location>
        <position position="179"/>
    </location>
</feature>
<feature type="glycosylation site" description="N-linked (GlcNAc...) asparagine" evidence="4">
    <location>
        <position position="252"/>
    </location>
</feature>
<feature type="disulfide bond" evidence="3">
    <location>
        <begin position="210"/>
        <end position="249"/>
    </location>
</feature>
<feature type="sequence conflict" description="In Ref. 1; CAK04098." evidence="5" ref="1">
    <original>G</original>
    <variation>S</variation>
    <location>
        <position position="184"/>
    </location>
</feature>
<reference key="1">
    <citation type="journal article" date="2013" name="Nature">
        <title>The zebrafish reference genome sequence and its relationship to the human genome.</title>
        <authorList>
            <person name="Howe K."/>
            <person name="Clark M.D."/>
            <person name="Torroja C.F."/>
            <person name="Torrance J."/>
            <person name="Berthelot C."/>
            <person name="Muffato M."/>
            <person name="Collins J.E."/>
            <person name="Humphray S."/>
            <person name="McLaren K."/>
            <person name="Matthews L."/>
            <person name="McLaren S."/>
            <person name="Sealy I."/>
            <person name="Caccamo M."/>
            <person name="Churcher C."/>
            <person name="Scott C."/>
            <person name="Barrett J.C."/>
            <person name="Koch R."/>
            <person name="Rauch G.J."/>
            <person name="White S."/>
            <person name="Chow W."/>
            <person name="Kilian B."/>
            <person name="Quintais L.T."/>
            <person name="Guerra-Assuncao J.A."/>
            <person name="Zhou Y."/>
            <person name="Gu Y."/>
            <person name="Yen J."/>
            <person name="Vogel J.H."/>
            <person name="Eyre T."/>
            <person name="Redmond S."/>
            <person name="Banerjee R."/>
            <person name="Chi J."/>
            <person name="Fu B."/>
            <person name="Langley E."/>
            <person name="Maguire S.F."/>
            <person name="Laird G.K."/>
            <person name="Lloyd D."/>
            <person name="Kenyon E."/>
            <person name="Donaldson S."/>
            <person name="Sehra H."/>
            <person name="Almeida-King J."/>
            <person name="Loveland J."/>
            <person name="Trevanion S."/>
            <person name="Jones M."/>
            <person name="Quail M."/>
            <person name="Willey D."/>
            <person name="Hunt A."/>
            <person name="Burton J."/>
            <person name="Sims S."/>
            <person name="McLay K."/>
            <person name="Plumb B."/>
            <person name="Davis J."/>
            <person name="Clee C."/>
            <person name="Oliver K."/>
            <person name="Clark R."/>
            <person name="Riddle C."/>
            <person name="Elliot D."/>
            <person name="Threadgold G."/>
            <person name="Harden G."/>
            <person name="Ware D."/>
            <person name="Begum S."/>
            <person name="Mortimore B."/>
            <person name="Kerry G."/>
            <person name="Heath P."/>
            <person name="Phillimore B."/>
            <person name="Tracey A."/>
            <person name="Corby N."/>
            <person name="Dunn M."/>
            <person name="Johnson C."/>
            <person name="Wood J."/>
            <person name="Clark S."/>
            <person name="Pelan S."/>
            <person name="Griffiths G."/>
            <person name="Smith M."/>
            <person name="Glithero R."/>
            <person name="Howden P."/>
            <person name="Barker N."/>
            <person name="Lloyd C."/>
            <person name="Stevens C."/>
            <person name="Harley J."/>
            <person name="Holt K."/>
            <person name="Panagiotidis G."/>
            <person name="Lovell J."/>
            <person name="Beasley H."/>
            <person name="Henderson C."/>
            <person name="Gordon D."/>
            <person name="Auger K."/>
            <person name="Wright D."/>
            <person name="Collins J."/>
            <person name="Raisen C."/>
            <person name="Dyer L."/>
            <person name="Leung K."/>
            <person name="Robertson L."/>
            <person name="Ambridge K."/>
            <person name="Leongamornlert D."/>
            <person name="McGuire S."/>
            <person name="Gilderthorp R."/>
            <person name="Griffiths C."/>
            <person name="Manthravadi D."/>
            <person name="Nichol S."/>
            <person name="Barker G."/>
            <person name="Whitehead S."/>
            <person name="Kay M."/>
            <person name="Brown J."/>
            <person name="Murnane C."/>
            <person name="Gray E."/>
            <person name="Humphries M."/>
            <person name="Sycamore N."/>
            <person name="Barker D."/>
            <person name="Saunders D."/>
            <person name="Wallis J."/>
            <person name="Babbage A."/>
            <person name="Hammond S."/>
            <person name="Mashreghi-Mohammadi M."/>
            <person name="Barr L."/>
            <person name="Martin S."/>
            <person name="Wray P."/>
            <person name="Ellington A."/>
            <person name="Matthews N."/>
            <person name="Ellwood M."/>
            <person name="Woodmansey R."/>
            <person name="Clark G."/>
            <person name="Cooper J."/>
            <person name="Tromans A."/>
            <person name="Grafham D."/>
            <person name="Skuce C."/>
            <person name="Pandian R."/>
            <person name="Andrews R."/>
            <person name="Harrison E."/>
            <person name="Kimberley A."/>
            <person name="Garnett J."/>
            <person name="Fosker N."/>
            <person name="Hall R."/>
            <person name="Garner P."/>
            <person name="Kelly D."/>
            <person name="Bird C."/>
            <person name="Palmer S."/>
            <person name="Gehring I."/>
            <person name="Berger A."/>
            <person name="Dooley C.M."/>
            <person name="Ersan-Urun Z."/>
            <person name="Eser C."/>
            <person name="Geiger H."/>
            <person name="Geisler M."/>
            <person name="Karotki L."/>
            <person name="Kirn A."/>
            <person name="Konantz J."/>
            <person name="Konantz M."/>
            <person name="Oberlander M."/>
            <person name="Rudolph-Geiger S."/>
            <person name="Teucke M."/>
            <person name="Lanz C."/>
            <person name="Raddatz G."/>
            <person name="Osoegawa K."/>
            <person name="Zhu B."/>
            <person name="Rapp A."/>
            <person name="Widaa S."/>
            <person name="Langford C."/>
            <person name="Yang F."/>
            <person name="Schuster S.C."/>
            <person name="Carter N.P."/>
            <person name="Harrow J."/>
            <person name="Ning Z."/>
            <person name="Herrero J."/>
            <person name="Searle S.M."/>
            <person name="Enright A."/>
            <person name="Geisler R."/>
            <person name="Plasterk R.H."/>
            <person name="Lee C."/>
            <person name="Westerfield M."/>
            <person name="de Jong P.J."/>
            <person name="Zon L.I."/>
            <person name="Postlethwait J.H."/>
            <person name="Nusslein-Volhard C."/>
            <person name="Hubbard T.J."/>
            <person name="Roest Crollius H."/>
            <person name="Rogers J."/>
            <person name="Stemple D.L."/>
        </authorList>
    </citation>
    <scope>NUCLEOTIDE SEQUENCE [LARGE SCALE GENOMIC DNA]</scope>
    <source>
        <strain>Tuebingen</strain>
    </source>
</reference>